<comment type="function">
    <text evidence="1 4">S-adenosyl-L-methionine-dependent methyltransferase that adds a methylphosphate cap at the 5'-end of 7SK snRNA (7SK RNA), leading to stabilize it (By similarity). Also has a non-enzymatic function as part of the 7SK RNP complex: the 7SK RNP complex sequesters the positive transcription elongation factor b (P-TEFb) in a large inactive 7SK RNP complex preventing RNA polymerase II phosphorylation and subsequent transcriptional elongation (PubMed:23154982). The 7SK RNP complex also promotes snRNA gene transcription by RNA polymerase II via interaction with the little elongation complex (LEC) (By similarity). In the 7SK RNP complex, MEPCE is required to stabilize 7SK RNA and facilitate the assembly of 7SK RNP complex (By similarity). MEPCE has a non-enzymatic function in the 7SK RNP complex; it has a non-enzymatic function; interaction with LARP7 within the 7SK RNP complex occluding its catalytic center (By similarity). Also required for stability of U6 snRNAs (By similarity).</text>
</comment>
<comment type="catalytic activity">
    <reaction evidence="1">
        <text>a 5'-end triphospho-guanosine-ribonucleotide-snRNA + S-adenosyl-L-methionine = a 5'-end methyltriphosphate-guanosine-ribonucleotide-snRNA + S-adenosyl-L-homocysteine</text>
        <dbReference type="Rhea" id="RHEA:58780"/>
        <dbReference type="Rhea" id="RHEA-COMP:15220"/>
        <dbReference type="Rhea" id="RHEA-COMP:15221"/>
        <dbReference type="ChEBI" id="CHEBI:57856"/>
        <dbReference type="ChEBI" id="CHEBI:59789"/>
        <dbReference type="ChEBI" id="CHEBI:138278"/>
        <dbReference type="ChEBI" id="CHEBI:142789"/>
    </reaction>
    <physiologicalReaction direction="left-to-right" evidence="1">
        <dbReference type="Rhea" id="RHEA:58781"/>
    </physiologicalReaction>
</comment>
<comment type="subunit">
    <text evidence="1">Core component of the 7SK RNP complex, at least composed of 7SK RNA, LARP7, MEPCE, HEXIM1 (or HEXIM2) and P-TEFb (composed of CDK9 and CCNT1/cyclin-T1). Interacts with METTL16. Interacts with RBM7; upon genotoxic stress this interaction is enhanced, triggering the release of inactive P-TEFb complex from the core, yielding to P-TEFb complex activation.</text>
</comment>
<comment type="subcellular location">
    <subcellularLocation>
        <location evidence="1">Nucleus</location>
    </subcellularLocation>
</comment>
<comment type="PTM">
    <text evidence="1">Dephosphorylated at Ser-126 by the PNUTS-PP1 complex, promoting RNA polymerase II transcription pause-release.</text>
</comment>
<comment type="similarity">
    <text evidence="7">Belongs to the methyltransferase superfamily.</text>
</comment>
<comment type="sequence caution" evidence="7">
    <conflict type="erroneous initiation">
        <sequence resource="EMBL-CDS" id="AAH17157"/>
    </conflict>
</comment>
<comment type="sequence caution" evidence="7">
    <conflict type="frameshift">
        <sequence resource="EMBL-CDS" id="AAX39492"/>
    </conflict>
</comment>
<evidence type="ECO:0000250" key="1">
    <source>
        <dbReference type="UniProtKB" id="Q7L2J0"/>
    </source>
</evidence>
<evidence type="ECO:0000255" key="2">
    <source>
        <dbReference type="PROSITE-ProRule" id="PRU00848"/>
    </source>
</evidence>
<evidence type="ECO:0000256" key="3">
    <source>
        <dbReference type="SAM" id="MobiDB-lite"/>
    </source>
</evidence>
<evidence type="ECO:0000269" key="4">
    <source>
    </source>
</evidence>
<evidence type="ECO:0000303" key="5">
    <source>
    </source>
</evidence>
<evidence type="ECO:0000303" key="6">
    <source>
    </source>
</evidence>
<evidence type="ECO:0000305" key="7"/>
<evidence type="ECO:0000312" key="8">
    <source>
        <dbReference type="MGI" id="MGI:106477"/>
    </source>
</evidence>
<evidence type="ECO:0007744" key="9">
    <source>
    </source>
</evidence>
<evidence type="ECO:0007744" key="10">
    <source>
    </source>
</evidence>
<evidence type="ECO:0007744" key="11">
    <source>
    </source>
</evidence>
<keyword id="KW-0007">Acetylation</keyword>
<keyword id="KW-1017">Isopeptide bond</keyword>
<keyword id="KW-0488">Methylation</keyword>
<keyword id="KW-0489">Methyltransferase</keyword>
<keyword id="KW-0539">Nucleus</keyword>
<keyword id="KW-0597">Phosphoprotein</keyword>
<keyword id="KW-1185">Reference proteome</keyword>
<keyword id="KW-0949">S-adenosyl-L-methionine</keyword>
<keyword id="KW-0808">Transferase</keyword>
<keyword id="KW-0832">Ubl conjugation</keyword>
<organism>
    <name type="scientific">Mus musculus</name>
    <name type="common">Mouse</name>
    <dbReference type="NCBI Taxonomy" id="10090"/>
    <lineage>
        <taxon>Eukaryota</taxon>
        <taxon>Metazoa</taxon>
        <taxon>Chordata</taxon>
        <taxon>Craniata</taxon>
        <taxon>Vertebrata</taxon>
        <taxon>Euteleostomi</taxon>
        <taxon>Mammalia</taxon>
        <taxon>Eutheria</taxon>
        <taxon>Euarchontoglires</taxon>
        <taxon>Glires</taxon>
        <taxon>Rodentia</taxon>
        <taxon>Myomorpha</taxon>
        <taxon>Muroidea</taxon>
        <taxon>Muridae</taxon>
        <taxon>Murinae</taxon>
        <taxon>Mus</taxon>
        <taxon>Mus</taxon>
    </lineage>
</organism>
<reference key="1">
    <citation type="journal article" date="2006" name="Physiol. Genomics">
        <title>Comparative analysis of the paired immunoglobulin-like receptor (PILR) locus in six mammalian genomes: duplication, conversion, and the birth of new genes.</title>
        <authorList>
            <person name="Wilson M.D."/>
            <person name="Cheung J."/>
            <person name="Martindale D.W."/>
            <person name="Scherer S.W."/>
            <person name="Koop B.F."/>
        </authorList>
    </citation>
    <scope>NUCLEOTIDE SEQUENCE [GENOMIC DNA]</scope>
    <source>
        <strain>129/Sv</strain>
    </source>
</reference>
<reference key="2">
    <citation type="journal article" date="2005" name="Science">
        <title>The transcriptional landscape of the mammalian genome.</title>
        <authorList>
            <person name="Carninci P."/>
            <person name="Kasukawa T."/>
            <person name="Katayama S."/>
            <person name="Gough J."/>
            <person name="Frith M.C."/>
            <person name="Maeda N."/>
            <person name="Oyama R."/>
            <person name="Ravasi T."/>
            <person name="Lenhard B."/>
            <person name="Wells C."/>
            <person name="Kodzius R."/>
            <person name="Shimokawa K."/>
            <person name="Bajic V.B."/>
            <person name="Brenner S.E."/>
            <person name="Batalov S."/>
            <person name="Forrest A.R."/>
            <person name="Zavolan M."/>
            <person name="Davis M.J."/>
            <person name="Wilming L.G."/>
            <person name="Aidinis V."/>
            <person name="Allen J.E."/>
            <person name="Ambesi-Impiombato A."/>
            <person name="Apweiler R."/>
            <person name="Aturaliya R.N."/>
            <person name="Bailey T.L."/>
            <person name="Bansal M."/>
            <person name="Baxter L."/>
            <person name="Beisel K.W."/>
            <person name="Bersano T."/>
            <person name="Bono H."/>
            <person name="Chalk A.M."/>
            <person name="Chiu K.P."/>
            <person name="Choudhary V."/>
            <person name="Christoffels A."/>
            <person name="Clutterbuck D.R."/>
            <person name="Crowe M.L."/>
            <person name="Dalla E."/>
            <person name="Dalrymple B.P."/>
            <person name="de Bono B."/>
            <person name="Della Gatta G."/>
            <person name="di Bernardo D."/>
            <person name="Down T."/>
            <person name="Engstrom P."/>
            <person name="Fagiolini M."/>
            <person name="Faulkner G."/>
            <person name="Fletcher C.F."/>
            <person name="Fukushima T."/>
            <person name="Furuno M."/>
            <person name="Futaki S."/>
            <person name="Gariboldi M."/>
            <person name="Georgii-Hemming P."/>
            <person name="Gingeras T.R."/>
            <person name="Gojobori T."/>
            <person name="Green R.E."/>
            <person name="Gustincich S."/>
            <person name="Harbers M."/>
            <person name="Hayashi Y."/>
            <person name="Hensch T.K."/>
            <person name="Hirokawa N."/>
            <person name="Hill D."/>
            <person name="Huminiecki L."/>
            <person name="Iacono M."/>
            <person name="Ikeo K."/>
            <person name="Iwama A."/>
            <person name="Ishikawa T."/>
            <person name="Jakt M."/>
            <person name="Kanapin A."/>
            <person name="Katoh M."/>
            <person name="Kawasawa Y."/>
            <person name="Kelso J."/>
            <person name="Kitamura H."/>
            <person name="Kitano H."/>
            <person name="Kollias G."/>
            <person name="Krishnan S.P."/>
            <person name="Kruger A."/>
            <person name="Kummerfeld S.K."/>
            <person name="Kurochkin I.V."/>
            <person name="Lareau L.F."/>
            <person name="Lazarevic D."/>
            <person name="Lipovich L."/>
            <person name="Liu J."/>
            <person name="Liuni S."/>
            <person name="McWilliam S."/>
            <person name="Madan Babu M."/>
            <person name="Madera M."/>
            <person name="Marchionni L."/>
            <person name="Matsuda H."/>
            <person name="Matsuzawa S."/>
            <person name="Miki H."/>
            <person name="Mignone F."/>
            <person name="Miyake S."/>
            <person name="Morris K."/>
            <person name="Mottagui-Tabar S."/>
            <person name="Mulder N."/>
            <person name="Nakano N."/>
            <person name="Nakauchi H."/>
            <person name="Ng P."/>
            <person name="Nilsson R."/>
            <person name="Nishiguchi S."/>
            <person name="Nishikawa S."/>
            <person name="Nori F."/>
            <person name="Ohara O."/>
            <person name="Okazaki Y."/>
            <person name="Orlando V."/>
            <person name="Pang K.C."/>
            <person name="Pavan W.J."/>
            <person name="Pavesi G."/>
            <person name="Pesole G."/>
            <person name="Petrovsky N."/>
            <person name="Piazza S."/>
            <person name="Reed J."/>
            <person name="Reid J.F."/>
            <person name="Ring B.Z."/>
            <person name="Ringwald M."/>
            <person name="Rost B."/>
            <person name="Ruan Y."/>
            <person name="Salzberg S.L."/>
            <person name="Sandelin A."/>
            <person name="Schneider C."/>
            <person name="Schoenbach C."/>
            <person name="Sekiguchi K."/>
            <person name="Semple C.A."/>
            <person name="Seno S."/>
            <person name="Sessa L."/>
            <person name="Sheng Y."/>
            <person name="Shibata Y."/>
            <person name="Shimada H."/>
            <person name="Shimada K."/>
            <person name="Silva D."/>
            <person name="Sinclair B."/>
            <person name="Sperling S."/>
            <person name="Stupka E."/>
            <person name="Sugiura K."/>
            <person name="Sultana R."/>
            <person name="Takenaka Y."/>
            <person name="Taki K."/>
            <person name="Tammoja K."/>
            <person name="Tan S.L."/>
            <person name="Tang S."/>
            <person name="Taylor M.S."/>
            <person name="Tegner J."/>
            <person name="Teichmann S.A."/>
            <person name="Ueda H.R."/>
            <person name="van Nimwegen E."/>
            <person name="Verardo R."/>
            <person name="Wei C.L."/>
            <person name="Yagi K."/>
            <person name="Yamanishi H."/>
            <person name="Zabarovsky E."/>
            <person name="Zhu S."/>
            <person name="Zimmer A."/>
            <person name="Hide W."/>
            <person name="Bult C."/>
            <person name="Grimmond S.M."/>
            <person name="Teasdale R.D."/>
            <person name="Liu E.T."/>
            <person name="Brusic V."/>
            <person name="Quackenbush J."/>
            <person name="Wahlestedt C."/>
            <person name="Mattick J.S."/>
            <person name="Hume D.A."/>
            <person name="Kai C."/>
            <person name="Sasaki D."/>
            <person name="Tomaru Y."/>
            <person name="Fukuda S."/>
            <person name="Kanamori-Katayama M."/>
            <person name="Suzuki M."/>
            <person name="Aoki J."/>
            <person name="Arakawa T."/>
            <person name="Iida J."/>
            <person name="Imamura K."/>
            <person name="Itoh M."/>
            <person name="Kato T."/>
            <person name="Kawaji H."/>
            <person name="Kawagashira N."/>
            <person name="Kawashima T."/>
            <person name="Kojima M."/>
            <person name="Kondo S."/>
            <person name="Konno H."/>
            <person name="Nakano K."/>
            <person name="Ninomiya N."/>
            <person name="Nishio T."/>
            <person name="Okada M."/>
            <person name="Plessy C."/>
            <person name="Shibata K."/>
            <person name="Shiraki T."/>
            <person name="Suzuki S."/>
            <person name="Tagami M."/>
            <person name="Waki K."/>
            <person name="Watahiki A."/>
            <person name="Okamura-Oho Y."/>
            <person name="Suzuki H."/>
            <person name="Kawai J."/>
            <person name="Hayashizaki Y."/>
        </authorList>
    </citation>
    <scope>NUCLEOTIDE SEQUENCE [LARGE SCALE MRNA]</scope>
    <source>
        <strain>C57BL/6J</strain>
        <strain>NOD</strain>
        <tissue>Egg</tissue>
    </source>
</reference>
<reference key="3">
    <citation type="journal article" date="2004" name="Genome Res.">
        <title>The status, quality, and expansion of the NIH full-length cDNA project: the Mammalian Gene Collection (MGC).</title>
        <authorList>
            <consortium name="The MGC Project Team"/>
        </authorList>
    </citation>
    <scope>NUCLEOTIDE SEQUENCE [LARGE SCALE MRNA]</scope>
    <source>
        <strain>Czech II</strain>
        <strain>FVB/N</strain>
        <tissue>Mammary tumor</tissue>
        <tissue>Salivary gland</tissue>
    </source>
</reference>
<reference key="4">
    <citation type="journal article" date="2007" name="Proc. Natl. Acad. Sci. U.S.A.">
        <title>Large-scale phosphorylation analysis of mouse liver.</title>
        <authorList>
            <person name="Villen J."/>
            <person name="Beausoleil S.A."/>
            <person name="Gerber S.A."/>
            <person name="Gygi S.P."/>
        </authorList>
    </citation>
    <scope>PHOSPHORYLATION [LARGE SCALE ANALYSIS] AT THR-188 AND SER-192</scope>
    <scope>IDENTIFICATION BY MASS SPECTROMETRY [LARGE SCALE ANALYSIS]</scope>
    <source>
        <tissue>Liver</tissue>
    </source>
</reference>
<reference key="5">
    <citation type="journal article" date="2010" name="Cell">
        <title>A tissue-specific atlas of mouse protein phosphorylation and expression.</title>
        <authorList>
            <person name="Huttlin E.L."/>
            <person name="Jedrychowski M.P."/>
            <person name="Elias J.E."/>
            <person name="Goswami T."/>
            <person name="Rad R."/>
            <person name="Beausoleil S.A."/>
            <person name="Villen J."/>
            <person name="Haas W."/>
            <person name="Sowa M.E."/>
            <person name="Gygi S.P."/>
        </authorList>
    </citation>
    <scope>PHOSPHORYLATION [LARGE SCALE ANALYSIS] AT THR-188 AND SER-192</scope>
    <scope>IDENTIFICATION BY MASS SPECTROMETRY [LARGE SCALE ANALYSIS]</scope>
    <source>
        <tissue>Brain</tissue>
        <tissue>Brown adipose tissue</tissue>
        <tissue>Heart</tissue>
        <tissue>Kidney</tissue>
        <tissue>Liver</tissue>
        <tissue>Lung</tissue>
        <tissue>Pancreas</tissue>
        <tissue>Spleen</tissue>
        <tissue>Testis</tissue>
    </source>
</reference>
<reference key="6">
    <citation type="journal article" date="2012" name="Genes Dev.">
        <title>Cell cycle gene-specific control of transcription has a critical role in proliferation of primordial germ cells.</title>
        <authorList>
            <person name="Okamura D."/>
            <person name="Maeda I."/>
            <person name="Taniguchi H."/>
            <person name="Tokitake Y."/>
            <person name="Ikeda M."/>
            <person name="Ozato K."/>
            <person name="Mise N."/>
            <person name="Abe K."/>
            <person name="Noce T."/>
            <person name="Izpisua Belmonte J.C."/>
            <person name="Matsui Y."/>
        </authorList>
    </citation>
    <scope>FUNCTION</scope>
</reference>
<reference key="7">
    <citation type="journal article" date="2014" name="Mol. Cell. Proteomics">
        <title>Immunoaffinity enrichment and mass spectrometry analysis of protein methylation.</title>
        <authorList>
            <person name="Guo A."/>
            <person name="Gu H."/>
            <person name="Zhou J."/>
            <person name="Mulhern D."/>
            <person name="Wang Y."/>
            <person name="Lee K.A."/>
            <person name="Yang V."/>
            <person name="Aguiar M."/>
            <person name="Kornhauser J."/>
            <person name="Jia X."/>
            <person name="Ren J."/>
            <person name="Beausoleil S.A."/>
            <person name="Silva J.C."/>
            <person name="Vemulapalli V."/>
            <person name="Bedford M.T."/>
            <person name="Comb M.J."/>
        </authorList>
    </citation>
    <scope>METHYLATION [LARGE SCALE ANALYSIS] AT ARG-91</scope>
    <scope>IDENTIFICATION BY MASS SPECTROMETRY [LARGE SCALE ANALYSIS]</scope>
    <source>
        <tissue>Brain</tissue>
    </source>
</reference>
<gene>
    <name evidence="6 8" type="primary">Mepce</name>
    <name evidence="8" type="synonym">Bcdin3</name>
    <name evidence="5" type="synonym">Bipl1</name>
    <name evidence="8" type="synonym">D5Wsu46e</name>
</gene>
<proteinExistence type="evidence at protein level"/>
<feature type="chain" id="PRO_0000289263" description="7SK snRNA methylphosphate capping enzyme">
    <location>
        <begin position="1"/>
        <end position="666"/>
    </location>
</feature>
<feature type="domain" description="Bin3-type SAM" evidence="2">
    <location>
        <begin position="408"/>
        <end position="663"/>
    </location>
</feature>
<feature type="region of interest" description="Disordered" evidence="3">
    <location>
        <begin position="1"/>
        <end position="141"/>
    </location>
</feature>
<feature type="region of interest" description="Disordered" evidence="3">
    <location>
        <begin position="235"/>
        <end position="291"/>
    </location>
</feature>
<feature type="region of interest" description="Disordered" evidence="3">
    <location>
        <begin position="309"/>
        <end position="383"/>
    </location>
</feature>
<feature type="compositionally biased region" description="Basic and acidic residues" evidence="3">
    <location>
        <begin position="1"/>
        <end position="10"/>
    </location>
</feature>
<feature type="compositionally biased region" description="Low complexity" evidence="3">
    <location>
        <begin position="50"/>
        <end position="61"/>
    </location>
</feature>
<feature type="compositionally biased region" description="Basic residues" evidence="3">
    <location>
        <begin position="235"/>
        <end position="244"/>
    </location>
</feature>
<feature type="compositionally biased region" description="Low complexity" evidence="3">
    <location>
        <begin position="245"/>
        <end position="254"/>
    </location>
</feature>
<feature type="compositionally biased region" description="Low complexity" evidence="3">
    <location>
        <begin position="309"/>
        <end position="337"/>
    </location>
</feature>
<feature type="compositionally biased region" description="Basic residues" evidence="3">
    <location>
        <begin position="338"/>
        <end position="347"/>
    </location>
</feature>
<feature type="binding site" evidence="1">
    <location>
        <position position="399"/>
    </location>
    <ligand>
        <name>S-adenosyl-L-methionine</name>
        <dbReference type="ChEBI" id="CHEBI:59789"/>
    </ligand>
</feature>
<feature type="binding site" evidence="1">
    <location>
        <position position="410"/>
    </location>
    <ligand>
        <name>S-adenosyl-L-methionine</name>
        <dbReference type="ChEBI" id="CHEBI:59789"/>
    </ligand>
</feature>
<feature type="binding site" evidence="1">
    <location>
        <begin position="428"/>
        <end position="430"/>
    </location>
    <ligand>
        <name>S-adenosyl-L-methionine</name>
        <dbReference type="ChEBI" id="CHEBI:59789"/>
    </ligand>
</feature>
<feature type="binding site" evidence="1">
    <location>
        <begin position="451"/>
        <end position="452"/>
    </location>
    <ligand>
        <name>S-adenosyl-L-methionine</name>
        <dbReference type="ChEBI" id="CHEBI:59789"/>
    </ligand>
</feature>
<feature type="binding site" evidence="1">
    <location>
        <begin position="536"/>
        <end position="537"/>
    </location>
    <ligand>
        <name>S-adenosyl-L-methionine</name>
        <dbReference type="ChEBI" id="CHEBI:59789"/>
    </ligand>
</feature>
<feature type="binding site" evidence="1">
    <location>
        <position position="558"/>
    </location>
    <ligand>
        <name>S-adenosyl-L-methionine</name>
        <dbReference type="ChEBI" id="CHEBI:59789"/>
    </ligand>
</feature>
<feature type="modified residue" description="N-acetylmethionine" evidence="1">
    <location>
        <position position="1"/>
    </location>
</feature>
<feature type="modified residue" description="Phosphoserine" evidence="1">
    <location>
        <position position="57"/>
    </location>
</feature>
<feature type="modified residue" description="Omega-N-methylarginine" evidence="11">
    <location>
        <position position="91"/>
    </location>
</feature>
<feature type="modified residue" description="Phosphoserine" evidence="1">
    <location>
        <position position="126"/>
    </location>
</feature>
<feature type="modified residue" description="Phosphoserine" evidence="1">
    <location>
        <position position="150"/>
    </location>
</feature>
<feature type="modified residue" description="Phosphoserine" evidence="1">
    <location>
        <position position="154"/>
    </location>
</feature>
<feature type="modified residue" description="Phosphothreonine" evidence="9 10">
    <location>
        <position position="188"/>
    </location>
</feature>
<feature type="modified residue" description="Phosphoserine" evidence="1">
    <location>
        <position position="191"/>
    </location>
</feature>
<feature type="modified residue" description="Phosphoserine" evidence="9 10">
    <location>
        <position position="192"/>
    </location>
</feature>
<feature type="modified residue" description="Phosphoserine" evidence="1">
    <location>
        <position position="229"/>
    </location>
</feature>
<feature type="modified residue" description="Phosphothreonine" evidence="1">
    <location>
        <position position="268"/>
    </location>
</feature>
<feature type="modified residue" description="Phosphoserine" evidence="1">
    <location>
        <position position="307"/>
    </location>
</feature>
<feature type="modified residue" description="Phosphoserine" evidence="1">
    <location>
        <position position="321"/>
    </location>
</feature>
<feature type="modified residue" description="Phosphoserine" evidence="1">
    <location>
        <position position="368"/>
    </location>
</feature>
<feature type="cross-link" description="Glycyl lysine isopeptide (Lys-Gly) (interchain with G-Cter in SUMO2)" evidence="1">
    <location>
        <position position="620"/>
    </location>
</feature>
<feature type="sequence conflict" description="In Ref. 1; AAX39492." evidence="7" ref="1">
    <location>
        <position position="80"/>
    </location>
</feature>
<feature type="sequence conflict" description="In Ref. 3; AAH26876." evidence="7" ref="3">
    <location>
        <position position="246"/>
    </location>
</feature>
<feature type="sequence conflict" description="In Ref. 3; AAH17157." evidence="7" ref="3">
    <original>K</original>
    <variation>M</variation>
    <location>
        <position position="441"/>
    </location>
</feature>
<accession>Q8K3A9</accession>
<accession>Q2YFS5</accession>
<accession>Q3U465</accession>
<accession>Q3UT64</accession>
<accession>Q91W35</accession>
<dbReference type="EC" id="2.1.1.-" evidence="1"/>
<dbReference type="EMBL" id="AY823670">
    <property type="protein sequence ID" value="AAX39492.1"/>
    <property type="status" value="ALT_FRAME"/>
    <property type="molecule type" value="Genomic_DNA"/>
</dbReference>
<dbReference type="EMBL" id="AK139731">
    <property type="protein sequence ID" value="BAE24116.1"/>
    <property type="molecule type" value="mRNA"/>
</dbReference>
<dbReference type="EMBL" id="AK154415">
    <property type="protein sequence ID" value="BAE32569.1"/>
    <property type="molecule type" value="mRNA"/>
</dbReference>
<dbReference type="EMBL" id="BC017157">
    <property type="protein sequence ID" value="AAH17157.2"/>
    <property type="status" value="ALT_INIT"/>
    <property type="molecule type" value="mRNA"/>
</dbReference>
<dbReference type="EMBL" id="BC026876">
    <property type="protein sequence ID" value="AAH26876.1"/>
    <property type="molecule type" value="mRNA"/>
</dbReference>
<dbReference type="CCDS" id="CCDS39337.1"/>
<dbReference type="RefSeq" id="NP_659162.3">
    <property type="nucleotide sequence ID" value="NM_144913.3"/>
</dbReference>
<dbReference type="SMR" id="Q8K3A9"/>
<dbReference type="BioGRID" id="231168">
    <property type="interactions" value="4"/>
</dbReference>
<dbReference type="FunCoup" id="Q8K3A9">
    <property type="interactions" value="2881"/>
</dbReference>
<dbReference type="IntAct" id="Q8K3A9">
    <property type="interactions" value="1"/>
</dbReference>
<dbReference type="STRING" id="10090.ENSMUSP00000031740"/>
<dbReference type="GlyGen" id="Q8K3A9">
    <property type="glycosylation" value="2 sites, 1 N-linked glycan (1 site), 1 O-linked glycan (1 site)"/>
</dbReference>
<dbReference type="iPTMnet" id="Q8K3A9"/>
<dbReference type="PhosphoSitePlus" id="Q8K3A9"/>
<dbReference type="jPOST" id="Q8K3A9"/>
<dbReference type="PaxDb" id="10090-ENSMUSP00000031740"/>
<dbReference type="PeptideAtlas" id="Q8K3A9"/>
<dbReference type="ProteomicsDB" id="295927"/>
<dbReference type="Pumba" id="Q8K3A9"/>
<dbReference type="Antibodypedia" id="30703">
    <property type="antibodies" value="199 antibodies from 30 providers"/>
</dbReference>
<dbReference type="DNASU" id="231803"/>
<dbReference type="Ensembl" id="ENSMUST00000031740.16">
    <property type="protein sequence ID" value="ENSMUSP00000031740.10"/>
    <property type="gene ID" value="ENSMUSG00000029726.17"/>
</dbReference>
<dbReference type="GeneID" id="231803"/>
<dbReference type="KEGG" id="mmu:231803"/>
<dbReference type="UCSC" id="uc009ady.1">
    <property type="organism name" value="mouse"/>
</dbReference>
<dbReference type="AGR" id="MGI:106477"/>
<dbReference type="CTD" id="56257"/>
<dbReference type="MGI" id="MGI:106477">
    <property type="gene designation" value="Mepce"/>
</dbReference>
<dbReference type="VEuPathDB" id="HostDB:ENSMUSG00000029726"/>
<dbReference type="eggNOG" id="KOG2899">
    <property type="taxonomic scope" value="Eukaryota"/>
</dbReference>
<dbReference type="GeneTree" id="ENSGT00940000153993"/>
<dbReference type="HOGENOM" id="CLU_004729_3_3_1"/>
<dbReference type="InParanoid" id="Q8K3A9"/>
<dbReference type="OMA" id="PVSMAIC"/>
<dbReference type="OrthoDB" id="10017101at2759"/>
<dbReference type="PhylomeDB" id="Q8K3A9"/>
<dbReference type="TreeFam" id="TF324061"/>
<dbReference type="BioGRID-ORCS" id="231803">
    <property type="hits" value="26 hits in 76 CRISPR screens"/>
</dbReference>
<dbReference type="PRO" id="PR:Q8K3A9"/>
<dbReference type="Proteomes" id="UP000000589">
    <property type="component" value="Chromosome 5"/>
</dbReference>
<dbReference type="RNAct" id="Q8K3A9">
    <property type="molecule type" value="protein"/>
</dbReference>
<dbReference type="Bgee" id="ENSMUSG00000029726">
    <property type="expression patterns" value="Expressed in embryonic post-anal tail and 260 other cell types or tissues"/>
</dbReference>
<dbReference type="ExpressionAtlas" id="Q8K3A9">
    <property type="expression patterns" value="baseline and differential"/>
</dbReference>
<dbReference type="GO" id="GO:0120259">
    <property type="term" value="C:7SK snRNP"/>
    <property type="evidence" value="ECO:0007669"/>
    <property type="project" value="Ensembl"/>
</dbReference>
<dbReference type="GO" id="GO:0005634">
    <property type="term" value="C:nucleus"/>
    <property type="evidence" value="ECO:0000250"/>
    <property type="project" value="UniProtKB"/>
</dbReference>
<dbReference type="GO" id="GO:1990904">
    <property type="term" value="C:ribonucleoprotein complex"/>
    <property type="evidence" value="ECO:0000250"/>
    <property type="project" value="UniProtKB"/>
</dbReference>
<dbReference type="GO" id="GO:0097322">
    <property type="term" value="F:7SK snRNA binding"/>
    <property type="evidence" value="ECO:0007669"/>
    <property type="project" value="Ensembl"/>
</dbReference>
<dbReference type="GO" id="GO:1990276">
    <property type="term" value="F:RNA 5'-gamma-phosphate methyltransferase activity"/>
    <property type="evidence" value="ECO:0000250"/>
    <property type="project" value="UniProtKB"/>
</dbReference>
<dbReference type="GO" id="GO:0008173">
    <property type="term" value="F:RNA methyltransferase activity"/>
    <property type="evidence" value="ECO:0000250"/>
    <property type="project" value="UniProtKB"/>
</dbReference>
<dbReference type="GO" id="GO:0008757">
    <property type="term" value="F:S-adenosylmethionine-dependent methyltransferase activity"/>
    <property type="evidence" value="ECO:0000250"/>
    <property type="project" value="UniProtKB"/>
</dbReference>
<dbReference type="GO" id="GO:0000122">
    <property type="term" value="P:negative regulation of transcription by RNA polymerase II"/>
    <property type="evidence" value="ECO:0000316"/>
    <property type="project" value="MGI"/>
</dbReference>
<dbReference type="GO" id="GO:1900087">
    <property type="term" value="P:positive regulation of G1/S transition of mitotic cell cycle"/>
    <property type="evidence" value="ECO:0000315"/>
    <property type="project" value="MGI"/>
</dbReference>
<dbReference type="GO" id="GO:1904871">
    <property type="term" value="P:positive regulation of protein localization to Cajal body"/>
    <property type="evidence" value="ECO:0000250"/>
    <property type="project" value="UniProtKB"/>
</dbReference>
<dbReference type="GO" id="GO:1905382">
    <property type="term" value="P:positive regulation of snRNA transcription by RNA polymerase II"/>
    <property type="evidence" value="ECO:0000250"/>
    <property type="project" value="UniProtKB"/>
</dbReference>
<dbReference type="GO" id="GO:0001510">
    <property type="term" value="P:RNA methylation"/>
    <property type="evidence" value="ECO:0000250"/>
    <property type="project" value="UniProtKB"/>
</dbReference>
<dbReference type="GO" id="GO:0016073">
    <property type="term" value="P:snRNA metabolic process"/>
    <property type="evidence" value="ECO:0000250"/>
    <property type="project" value="UniProtKB"/>
</dbReference>
<dbReference type="GO" id="GO:0040031">
    <property type="term" value="P:snRNA modification"/>
    <property type="evidence" value="ECO:0000250"/>
    <property type="project" value="UniProtKB"/>
</dbReference>
<dbReference type="CDD" id="cd02440">
    <property type="entry name" value="AdoMet_MTases"/>
    <property type="match status" value="1"/>
</dbReference>
<dbReference type="Gene3D" id="3.40.50.150">
    <property type="entry name" value="Vaccinia Virus protein VP39"/>
    <property type="match status" value="1"/>
</dbReference>
<dbReference type="InterPro" id="IPR039772">
    <property type="entry name" value="Bin3-like"/>
</dbReference>
<dbReference type="InterPro" id="IPR010675">
    <property type="entry name" value="Bin3_C"/>
</dbReference>
<dbReference type="InterPro" id="IPR024160">
    <property type="entry name" value="BIN3_SAM-bd_dom"/>
</dbReference>
<dbReference type="InterPro" id="IPR025714">
    <property type="entry name" value="Methyltranfer_dom"/>
</dbReference>
<dbReference type="InterPro" id="IPR029063">
    <property type="entry name" value="SAM-dependent_MTases_sf"/>
</dbReference>
<dbReference type="PANTHER" id="PTHR12315:SF0">
    <property type="entry name" value="7SK SNRNA METHYLPHOSPHATE CAPPING ENZYME"/>
    <property type="match status" value="1"/>
</dbReference>
<dbReference type="PANTHER" id="PTHR12315">
    <property type="entry name" value="BICOID-INTERACTING PROTEIN RELATED"/>
    <property type="match status" value="1"/>
</dbReference>
<dbReference type="Pfam" id="PF06859">
    <property type="entry name" value="Bin3"/>
    <property type="match status" value="1"/>
</dbReference>
<dbReference type="Pfam" id="PF13847">
    <property type="entry name" value="Methyltransf_31"/>
    <property type="match status" value="1"/>
</dbReference>
<dbReference type="SUPFAM" id="SSF53335">
    <property type="entry name" value="S-adenosyl-L-methionine-dependent methyltransferases"/>
    <property type="match status" value="1"/>
</dbReference>
<dbReference type="PROSITE" id="PS51515">
    <property type="entry name" value="BIN3_SAM"/>
    <property type="match status" value="1"/>
</dbReference>
<protein>
    <recommendedName>
        <fullName evidence="6">7SK snRNA methylphosphate capping enzyme</fullName>
        <shortName evidence="6">MePCE</shortName>
        <ecNumber evidence="1">2.1.1.-</ecNumber>
    </recommendedName>
</protein>
<name>MEPCE_MOUSE</name>
<sequence length="666" mass="72050">MIEMAAEKEPFLVPAPPPPLKDESGGGGGPEVQSHQEAASGELRDGTEHGPGPRAHSAGAAASGGGGPQAQAHGEPHGRAAAPADVGEERRGGGGTDLGPPAPPRPRNGYQPHRPPGGGGGKRRNSCNVGGGSGGSFKHPAFKRRRRVNSDCDSVLPSNFLLGGNIFDPLNLNSLLDEEVSRALNAETPKSSPLPAKGRDPVEILIPKDITDPLSLNTCTDEAHVVLASPLKIGRKRHRHRGPHHQQQQQASGGNDSNAAVLPTDPLTPSLHGEGATQQQQNRGQNRDAPQPYELNTAINCRDEVVSPLPSALQGSSGSLSAPPAASVTSAPSTSSSSRHRKRRRTSSKSEAGARGGSQGSKEKGRGSGGGRHHHHPLPATGFKKQQLKFQYGNYCKYYGYRNPSCEDVRLRVLKPEWFQGRDVLDLGCNVGHLTLSIACKWGPARMVGLDIDPRLIHSARQNIRHYLSEELRLQAQTSEGDPGTEGEEGTITVRKRSCFPASLTASRGPIAAPQVPLDGADTSVFPNNVVFVTGNYVLDRDELVDAQRPEYDVVLCFSLTKWVHLNWGDEGLKRMFRRIYRHLRPGGILVLEPQPWSSYCKRKSLTETIYKNYFRIQLKPEQFSSYLTSPEVGFSSYELVATPNNTSRGFQRPVYLFHKARSPSH</sequence>